<protein>
    <recommendedName>
        <fullName evidence="1">Arginine--tRNA ligase</fullName>
        <ecNumber evidence="1">6.1.1.19</ecNumber>
    </recommendedName>
    <alternativeName>
        <fullName evidence="1">Arginyl-tRNA synthetase</fullName>
        <shortName evidence="1">ArgRS</shortName>
    </alternativeName>
</protein>
<accession>B9LGY2</accession>
<gene>
    <name evidence="1" type="primary">argS</name>
    <name type="ordered locus">Chy400_2184</name>
</gene>
<feature type="chain" id="PRO_1000198884" description="Arginine--tRNA ligase">
    <location>
        <begin position="1"/>
        <end position="574"/>
    </location>
</feature>
<feature type="short sequence motif" description="'HIGH' region">
    <location>
        <begin position="126"/>
        <end position="136"/>
    </location>
</feature>
<sequence length="574" mass="63529">MRYALERFISDIQAAIVATGKVPADLIEITTPKPNIPADRTFVTFKAAKALGVDPVRLAADLATAIVPPPDSLIGEVTATGAFLNFTLHPQRLAAAVMAEIETYGDAYGSVADGANRTVVIDYSSPNIAKRMHVGHIRSTIIGQALVHIFRALGYRVIGDNHLGDWGTQFGIILAAMQRYGRPQNEGEAAMAELEALYARYNAEMKDNPPLEDEARRWSLALEQGDPTARELWQWCVDLTMRAAQRNYDRLGVRFDYAYGESFYEAMLPGVIEEALQSGAAFRDVDGAVVAELDKLPRFIVQRSDGGTVYITRDIATIKFRLQEFNPSHIIYVVDARQELHFRQLFAIVRAMGYALDVELIHVPFGVITTPDGQPLSTKKGNMVYLESLLDDAVARARALVDAKSPTLSPEERAQIAEAVGIGAVIYNDLYQDPRRNITLDWDRMLSIEGNSAAYLQYSHARCRSILRRAAEEGMLSTEVDPGLLTHPSEQRLVRHLARLPEAVREAGARYAPFVIADWCYTTAREFGIFFEQCPVLRAETPALRAARLQLVSATANALRNGLALLGIQAPERM</sequence>
<proteinExistence type="inferred from homology"/>
<evidence type="ECO:0000255" key="1">
    <source>
        <dbReference type="HAMAP-Rule" id="MF_00123"/>
    </source>
</evidence>
<name>SYR_CHLSY</name>
<dbReference type="EC" id="6.1.1.19" evidence="1"/>
<dbReference type="EMBL" id="CP001364">
    <property type="protein sequence ID" value="ACM53584.1"/>
    <property type="molecule type" value="Genomic_DNA"/>
</dbReference>
<dbReference type="SMR" id="B9LGY2"/>
<dbReference type="KEGG" id="chl:Chy400_2184"/>
<dbReference type="HOGENOM" id="CLU_006406_5_1_0"/>
<dbReference type="OrthoDB" id="9805987at2"/>
<dbReference type="GO" id="GO:0005737">
    <property type="term" value="C:cytoplasm"/>
    <property type="evidence" value="ECO:0007669"/>
    <property type="project" value="UniProtKB-SubCell"/>
</dbReference>
<dbReference type="GO" id="GO:0004814">
    <property type="term" value="F:arginine-tRNA ligase activity"/>
    <property type="evidence" value="ECO:0007669"/>
    <property type="project" value="UniProtKB-UniRule"/>
</dbReference>
<dbReference type="GO" id="GO:0005524">
    <property type="term" value="F:ATP binding"/>
    <property type="evidence" value="ECO:0007669"/>
    <property type="project" value="UniProtKB-UniRule"/>
</dbReference>
<dbReference type="GO" id="GO:0006420">
    <property type="term" value="P:arginyl-tRNA aminoacylation"/>
    <property type="evidence" value="ECO:0007669"/>
    <property type="project" value="UniProtKB-UniRule"/>
</dbReference>
<dbReference type="CDD" id="cd07956">
    <property type="entry name" value="Anticodon_Ia_Arg"/>
    <property type="match status" value="1"/>
</dbReference>
<dbReference type="CDD" id="cd00671">
    <property type="entry name" value="ArgRS_core"/>
    <property type="match status" value="1"/>
</dbReference>
<dbReference type="FunFam" id="1.10.730.10:FF:000109">
    <property type="entry name" value="Arginine--tRNA ligase"/>
    <property type="match status" value="1"/>
</dbReference>
<dbReference type="FunFam" id="3.40.50.620:FF:000116">
    <property type="entry name" value="Arginine--tRNA ligase"/>
    <property type="match status" value="1"/>
</dbReference>
<dbReference type="Gene3D" id="3.30.1360.70">
    <property type="entry name" value="Arginyl tRNA synthetase N-terminal domain"/>
    <property type="match status" value="1"/>
</dbReference>
<dbReference type="Gene3D" id="3.40.50.620">
    <property type="entry name" value="HUPs"/>
    <property type="match status" value="1"/>
</dbReference>
<dbReference type="Gene3D" id="1.10.730.10">
    <property type="entry name" value="Isoleucyl-tRNA Synthetase, Domain 1"/>
    <property type="match status" value="1"/>
</dbReference>
<dbReference type="HAMAP" id="MF_00123">
    <property type="entry name" value="Arg_tRNA_synth"/>
    <property type="match status" value="1"/>
</dbReference>
<dbReference type="InterPro" id="IPR001412">
    <property type="entry name" value="aa-tRNA-synth_I_CS"/>
</dbReference>
<dbReference type="InterPro" id="IPR001278">
    <property type="entry name" value="Arg-tRNA-ligase"/>
</dbReference>
<dbReference type="InterPro" id="IPR005148">
    <property type="entry name" value="Arg-tRNA-synth_N"/>
</dbReference>
<dbReference type="InterPro" id="IPR036695">
    <property type="entry name" value="Arg-tRNA-synth_N_sf"/>
</dbReference>
<dbReference type="InterPro" id="IPR035684">
    <property type="entry name" value="ArgRS_core"/>
</dbReference>
<dbReference type="InterPro" id="IPR008909">
    <property type="entry name" value="DALR_anticod-bd"/>
</dbReference>
<dbReference type="InterPro" id="IPR014729">
    <property type="entry name" value="Rossmann-like_a/b/a_fold"/>
</dbReference>
<dbReference type="InterPro" id="IPR009080">
    <property type="entry name" value="tRNAsynth_Ia_anticodon-bd"/>
</dbReference>
<dbReference type="NCBIfam" id="TIGR00456">
    <property type="entry name" value="argS"/>
    <property type="match status" value="1"/>
</dbReference>
<dbReference type="PANTHER" id="PTHR11956:SF5">
    <property type="entry name" value="ARGININE--TRNA LIGASE, CYTOPLASMIC"/>
    <property type="match status" value="1"/>
</dbReference>
<dbReference type="PANTHER" id="PTHR11956">
    <property type="entry name" value="ARGINYL-TRNA SYNTHETASE"/>
    <property type="match status" value="1"/>
</dbReference>
<dbReference type="Pfam" id="PF03485">
    <property type="entry name" value="Arg_tRNA_synt_N"/>
    <property type="match status" value="1"/>
</dbReference>
<dbReference type="Pfam" id="PF05746">
    <property type="entry name" value="DALR_1"/>
    <property type="match status" value="1"/>
</dbReference>
<dbReference type="Pfam" id="PF00750">
    <property type="entry name" value="tRNA-synt_1d"/>
    <property type="match status" value="1"/>
</dbReference>
<dbReference type="PRINTS" id="PR01038">
    <property type="entry name" value="TRNASYNTHARG"/>
</dbReference>
<dbReference type="SMART" id="SM01016">
    <property type="entry name" value="Arg_tRNA_synt_N"/>
    <property type="match status" value="1"/>
</dbReference>
<dbReference type="SMART" id="SM00836">
    <property type="entry name" value="DALR_1"/>
    <property type="match status" value="1"/>
</dbReference>
<dbReference type="SUPFAM" id="SSF47323">
    <property type="entry name" value="Anticodon-binding domain of a subclass of class I aminoacyl-tRNA synthetases"/>
    <property type="match status" value="1"/>
</dbReference>
<dbReference type="SUPFAM" id="SSF55190">
    <property type="entry name" value="Arginyl-tRNA synthetase (ArgRS), N-terminal 'additional' domain"/>
    <property type="match status" value="1"/>
</dbReference>
<dbReference type="SUPFAM" id="SSF52374">
    <property type="entry name" value="Nucleotidylyl transferase"/>
    <property type="match status" value="1"/>
</dbReference>
<dbReference type="PROSITE" id="PS00178">
    <property type="entry name" value="AA_TRNA_LIGASE_I"/>
    <property type="match status" value="1"/>
</dbReference>
<comment type="catalytic activity">
    <reaction evidence="1">
        <text>tRNA(Arg) + L-arginine + ATP = L-arginyl-tRNA(Arg) + AMP + diphosphate</text>
        <dbReference type="Rhea" id="RHEA:20301"/>
        <dbReference type="Rhea" id="RHEA-COMP:9658"/>
        <dbReference type="Rhea" id="RHEA-COMP:9673"/>
        <dbReference type="ChEBI" id="CHEBI:30616"/>
        <dbReference type="ChEBI" id="CHEBI:32682"/>
        <dbReference type="ChEBI" id="CHEBI:33019"/>
        <dbReference type="ChEBI" id="CHEBI:78442"/>
        <dbReference type="ChEBI" id="CHEBI:78513"/>
        <dbReference type="ChEBI" id="CHEBI:456215"/>
        <dbReference type="EC" id="6.1.1.19"/>
    </reaction>
</comment>
<comment type="subunit">
    <text evidence="1">Monomer.</text>
</comment>
<comment type="subcellular location">
    <subcellularLocation>
        <location evidence="1">Cytoplasm</location>
    </subcellularLocation>
</comment>
<comment type="similarity">
    <text evidence="1">Belongs to the class-I aminoacyl-tRNA synthetase family.</text>
</comment>
<organism>
    <name type="scientific">Chloroflexus aurantiacus (strain ATCC 29364 / DSM 637 / Y-400-fl)</name>
    <dbReference type="NCBI Taxonomy" id="480224"/>
    <lineage>
        <taxon>Bacteria</taxon>
        <taxon>Bacillati</taxon>
        <taxon>Chloroflexota</taxon>
        <taxon>Chloroflexia</taxon>
        <taxon>Chloroflexales</taxon>
        <taxon>Chloroflexineae</taxon>
        <taxon>Chloroflexaceae</taxon>
        <taxon>Chloroflexus</taxon>
    </lineage>
</organism>
<reference key="1">
    <citation type="submission" date="2009-01" db="EMBL/GenBank/DDBJ databases">
        <title>Complete sequence of Chloroflexus sp. Y-400-fl.</title>
        <authorList>
            <consortium name="US DOE Joint Genome Institute"/>
            <person name="Lucas S."/>
            <person name="Copeland A."/>
            <person name="Lapidus A."/>
            <person name="Glavina del Rio T."/>
            <person name="Dalin E."/>
            <person name="Tice H."/>
            <person name="Bruce D."/>
            <person name="Goodwin L."/>
            <person name="Pitluck S."/>
            <person name="Sims D."/>
            <person name="Kiss H."/>
            <person name="Brettin T."/>
            <person name="Detter J.C."/>
            <person name="Han C."/>
            <person name="Larimer F."/>
            <person name="Land M."/>
            <person name="Hauser L."/>
            <person name="Kyrpides N."/>
            <person name="Ovchinnikova G."/>
            <person name="Bryant D.A."/>
            <person name="Richardson P."/>
        </authorList>
    </citation>
    <scope>NUCLEOTIDE SEQUENCE [LARGE SCALE GENOMIC DNA]</scope>
    <source>
        <strain>ATCC 29364 / DSM 637 / Y-400-fl</strain>
    </source>
</reference>
<keyword id="KW-0030">Aminoacyl-tRNA synthetase</keyword>
<keyword id="KW-0067">ATP-binding</keyword>
<keyword id="KW-0963">Cytoplasm</keyword>
<keyword id="KW-0436">Ligase</keyword>
<keyword id="KW-0547">Nucleotide-binding</keyword>
<keyword id="KW-0648">Protein biosynthesis</keyword>